<evidence type="ECO:0000250" key="1"/>
<evidence type="ECO:0000255" key="2"/>
<evidence type="ECO:0000255" key="3">
    <source>
        <dbReference type="PROSITE-ProRule" id="PRU10095"/>
    </source>
</evidence>
<evidence type="ECO:0000305" key="4"/>
<gene>
    <name type="primary">oct1</name>
    <name type="ORF">AFUA_6G08640</name>
</gene>
<name>PMIP_ASPFU</name>
<comment type="function">
    <text evidence="1">Cleaves proteins, imported into the mitochondrion, to their mature size. While most mitochondrial precursor proteins are processed to the mature form in one step by mitochondrial processing peptidase (MPP), the sequential cleavage by MIP of an octapeptide after initial processing by MPP is a required step for a subgroup of nuclear-encoded precursor proteins destined for the matrix or the inner membrane (By similarity).</text>
</comment>
<comment type="catalytic activity">
    <reaction>
        <text>Release of an N-terminal octapeptide as second stage of processing of some proteins imported into the mitochondrion.</text>
        <dbReference type="EC" id="3.4.24.59"/>
    </reaction>
</comment>
<comment type="cofactor">
    <cofactor evidence="1">
        <name>Zn(2+)</name>
        <dbReference type="ChEBI" id="CHEBI:29105"/>
    </cofactor>
    <text evidence="1">Binds 1 zinc ion.</text>
</comment>
<comment type="subcellular location">
    <subcellularLocation>
        <location evidence="1">Mitochondrion matrix</location>
    </subcellularLocation>
</comment>
<comment type="similarity">
    <text evidence="4">Belongs to the peptidase M3 family.</text>
</comment>
<reference key="1">
    <citation type="journal article" date="2005" name="Nature">
        <title>Genomic sequence of the pathogenic and allergenic filamentous fungus Aspergillus fumigatus.</title>
        <authorList>
            <person name="Nierman W.C."/>
            <person name="Pain A."/>
            <person name="Anderson M.J."/>
            <person name="Wortman J.R."/>
            <person name="Kim H.S."/>
            <person name="Arroyo J."/>
            <person name="Berriman M."/>
            <person name="Abe K."/>
            <person name="Archer D.B."/>
            <person name="Bermejo C."/>
            <person name="Bennett J.W."/>
            <person name="Bowyer P."/>
            <person name="Chen D."/>
            <person name="Collins M."/>
            <person name="Coulsen R."/>
            <person name="Davies R."/>
            <person name="Dyer P.S."/>
            <person name="Farman M.L."/>
            <person name="Fedorova N."/>
            <person name="Fedorova N.D."/>
            <person name="Feldblyum T.V."/>
            <person name="Fischer R."/>
            <person name="Fosker N."/>
            <person name="Fraser A."/>
            <person name="Garcia J.L."/>
            <person name="Garcia M.J."/>
            <person name="Goble A."/>
            <person name="Goldman G.H."/>
            <person name="Gomi K."/>
            <person name="Griffith-Jones S."/>
            <person name="Gwilliam R."/>
            <person name="Haas B.J."/>
            <person name="Haas H."/>
            <person name="Harris D.E."/>
            <person name="Horiuchi H."/>
            <person name="Huang J."/>
            <person name="Humphray S."/>
            <person name="Jimenez J."/>
            <person name="Keller N."/>
            <person name="Khouri H."/>
            <person name="Kitamoto K."/>
            <person name="Kobayashi T."/>
            <person name="Konzack S."/>
            <person name="Kulkarni R."/>
            <person name="Kumagai T."/>
            <person name="Lafton A."/>
            <person name="Latge J.-P."/>
            <person name="Li W."/>
            <person name="Lord A."/>
            <person name="Lu C."/>
            <person name="Majoros W.H."/>
            <person name="May G.S."/>
            <person name="Miller B.L."/>
            <person name="Mohamoud Y."/>
            <person name="Molina M."/>
            <person name="Monod M."/>
            <person name="Mouyna I."/>
            <person name="Mulligan S."/>
            <person name="Murphy L.D."/>
            <person name="O'Neil S."/>
            <person name="Paulsen I."/>
            <person name="Penalva M.A."/>
            <person name="Pertea M."/>
            <person name="Price C."/>
            <person name="Pritchard B.L."/>
            <person name="Quail M.A."/>
            <person name="Rabbinowitsch E."/>
            <person name="Rawlins N."/>
            <person name="Rajandream M.A."/>
            <person name="Reichard U."/>
            <person name="Renauld H."/>
            <person name="Robson G.D."/>
            <person name="Rodriguez de Cordoba S."/>
            <person name="Rodriguez-Pena J.M."/>
            <person name="Ronning C.M."/>
            <person name="Rutter S."/>
            <person name="Salzberg S.L."/>
            <person name="Sanchez M."/>
            <person name="Sanchez-Ferrero J.C."/>
            <person name="Saunders D."/>
            <person name="Seeger K."/>
            <person name="Squares R."/>
            <person name="Squares S."/>
            <person name="Takeuchi M."/>
            <person name="Tekaia F."/>
            <person name="Turner G."/>
            <person name="Vazquez de Aldana C.R."/>
            <person name="Weidman J."/>
            <person name="White O."/>
            <person name="Woodward J.R."/>
            <person name="Yu J.-H."/>
            <person name="Fraser C.M."/>
            <person name="Galagan J.E."/>
            <person name="Asai K."/>
            <person name="Machida M."/>
            <person name="Hall N."/>
            <person name="Barrell B.G."/>
            <person name="Denning D.W."/>
        </authorList>
    </citation>
    <scope>NUCLEOTIDE SEQUENCE [LARGE SCALE GENOMIC DNA]</scope>
    <source>
        <strain>ATCC MYA-4609 / CBS 101355 / FGSC A1100 / Af293</strain>
    </source>
</reference>
<proteinExistence type="inferred from homology"/>
<accession>Q4WMU9</accession>
<organism>
    <name type="scientific">Aspergillus fumigatus (strain ATCC MYA-4609 / CBS 101355 / FGSC A1100 / Af293)</name>
    <name type="common">Neosartorya fumigata</name>
    <dbReference type="NCBI Taxonomy" id="330879"/>
    <lineage>
        <taxon>Eukaryota</taxon>
        <taxon>Fungi</taxon>
        <taxon>Dikarya</taxon>
        <taxon>Ascomycota</taxon>
        <taxon>Pezizomycotina</taxon>
        <taxon>Eurotiomycetes</taxon>
        <taxon>Eurotiomycetidae</taxon>
        <taxon>Eurotiales</taxon>
        <taxon>Aspergillaceae</taxon>
        <taxon>Aspergillus</taxon>
        <taxon>Aspergillus subgen. Fumigati</taxon>
    </lineage>
</organism>
<sequence length="801" mass="89695">MKDQLLVPLRRRPWTCQKCLQRLQLPRHQTRRSFETAASPFPRPLDSLPADYARTKTVDDDTLRRVFDSQQFWREFSQQRAAQPKPTGLVQNQYLTSPDGFRTFANVSLQKCQAIVSKVLAASTLEEYRTMARDLDRLSDLLCRVIDLSDFIRVIHPDPQVQEAATQAYALMFEYMNVLNTTTGLNDQLKKAAANPEVTSQWSDEEKIVAQILIKDFSNSAIHMPPHERQRFVNLSNDISQLGSSFVNGAEPAKSHVSVATNNLRGLDPILVQQIKRWNRTAAVPTTGMIPRLALRSVHDENVRREVYLASRTSSKRQLHRLEELLLKRAELAKLSGYESFAHMTLSDKMAKSPEAVSNFLTALVESNRKLVREELSQLQVMKGAPLQPWDHAYYVHQRVLQYSQARRSRELSAVPEFFSLGTVMQGLSRLFDRLYGVRLVPQEPAPGETWNPDVRRLDVVDEAGRHIAVIYCDLFSRPNKHPNPAHFTLRCSREISAEEVAECASLDQSSHPNDGMATAVDPVTQTLRQLPTIALVCDFPEPGTNGGGRPSLLSEHSVRTLFHEMGHAVHSILGQTRLQSISGTRCATDFAELPSVLMEHFATVPSVLALYARHWRTDEPLSEGMIRSMERDRTAHGSIYGAVENEAQILMALVDQAYHSRPADGGRIDSTALYQQVSQQHSSLPEPADATTPPTSWQGFFGHLYGYGATYYSYIFDRAIANKLWVDVFGAGRHAVDRAAGERYKNEVLRWGGGRSGWECVAGALGSANESNADGRLVEGGDQAMREVGRWGLGRDGVSG</sequence>
<feature type="transit peptide" description="Mitochondrion" evidence="2">
    <location>
        <begin position="1"/>
        <end position="41"/>
    </location>
</feature>
<feature type="chain" id="PRO_0000338571" description="Mitochondrial intermediate peptidase">
    <location>
        <begin position="42"/>
        <end position="801"/>
    </location>
</feature>
<feature type="active site" evidence="3">
    <location>
        <position position="565"/>
    </location>
</feature>
<feature type="binding site" evidence="3">
    <location>
        <position position="564"/>
    </location>
    <ligand>
        <name>Zn(2+)</name>
        <dbReference type="ChEBI" id="CHEBI:29105"/>
        <note>catalytic</note>
    </ligand>
</feature>
<feature type="binding site" evidence="3">
    <location>
        <position position="568"/>
    </location>
    <ligand>
        <name>Zn(2+)</name>
        <dbReference type="ChEBI" id="CHEBI:29105"/>
        <note>catalytic</note>
    </ligand>
</feature>
<feature type="binding site" evidence="3">
    <location>
        <position position="571"/>
    </location>
    <ligand>
        <name>Zn(2+)</name>
        <dbReference type="ChEBI" id="CHEBI:29105"/>
        <note>catalytic</note>
    </ligand>
</feature>
<dbReference type="EC" id="3.4.24.59"/>
<dbReference type="EMBL" id="AAHF01000006">
    <property type="protein sequence ID" value="EAL88715.1"/>
    <property type="molecule type" value="Genomic_DNA"/>
</dbReference>
<dbReference type="RefSeq" id="XP_750753.1">
    <property type="nucleotide sequence ID" value="XM_745660.1"/>
</dbReference>
<dbReference type="SMR" id="Q4WMU9"/>
<dbReference type="FunCoup" id="Q4WMU9">
    <property type="interactions" value="637"/>
</dbReference>
<dbReference type="STRING" id="330879.Q4WMU9"/>
<dbReference type="MEROPS" id="M03.006"/>
<dbReference type="EnsemblFungi" id="EAL88715">
    <property type="protein sequence ID" value="EAL88715"/>
    <property type="gene ID" value="AFUA_6G08640"/>
</dbReference>
<dbReference type="GeneID" id="3508040"/>
<dbReference type="KEGG" id="afm:AFUA_6G08640"/>
<dbReference type="VEuPathDB" id="FungiDB:Afu6g08640"/>
<dbReference type="eggNOG" id="KOG2090">
    <property type="taxonomic scope" value="Eukaryota"/>
</dbReference>
<dbReference type="HOGENOM" id="CLU_001805_0_0_1"/>
<dbReference type="InParanoid" id="Q4WMU9"/>
<dbReference type="OMA" id="ALMFEYM"/>
<dbReference type="OrthoDB" id="17530at2759"/>
<dbReference type="Proteomes" id="UP000002530">
    <property type="component" value="Chromosome 6"/>
</dbReference>
<dbReference type="GO" id="GO:0005759">
    <property type="term" value="C:mitochondrial matrix"/>
    <property type="evidence" value="ECO:0007669"/>
    <property type="project" value="UniProtKB-SubCell"/>
</dbReference>
<dbReference type="GO" id="GO:0005739">
    <property type="term" value="C:mitochondrion"/>
    <property type="evidence" value="ECO:0000318"/>
    <property type="project" value="GO_Central"/>
</dbReference>
<dbReference type="GO" id="GO:0046872">
    <property type="term" value="F:metal ion binding"/>
    <property type="evidence" value="ECO:0007669"/>
    <property type="project" value="UniProtKB-KW"/>
</dbReference>
<dbReference type="GO" id="GO:0004222">
    <property type="term" value="F:metalloendopeptidase activity"/>
    <property type="evidence" value="ECO:0000318"/>
    <property type="project" value="GO_Central"/>
</dbReference>
<dbReference type="GO" id="GO:0006518">
    <property type="term" value="P:peptide metabolic process"/>
    <property type="evidence" value="ECO:0000318"/>
    <property type="project" value="GO_Central"/>
</dbReference>
<dbReference type="GO" id="GO:0006627">
    <property type="term" value="P:protein processing involved in protein targeting to mitochondrion"/>
    <property type="evidence" value="ECO:0000318"/>
    <property type="project" value="GO_Central"/>
</dbReference>
<dbReference type="CDD" id="cd06457">
    <property type="entry name" value="M3A_MIP"/>
    <property type="match status" value="1"/>
</dbReference>
<dbReference type="FunFam" id="3.40.390.10:FF:000029">
    <property type="entry name" value="Mitochondrial intermediate peptidase 1"/>
    <property type="match status" value="1"/>
</dbReference>
<dbReference type="Gene3D" id="3.40.390.10">
    <property type="entry name" value="Collagenase (Catalytic Domain)"/>
    <property type="match status" value="1"/>
</dbReference>
<dbReference type="Gene3D" id="1.10.1370.10">
    <property type="entry name" value="Neurolysin, domain 3"/>
    <property type="match status" value="1"/>
</dbReference>
<dbReference type="InterPro" id="IPR033851">
    <property type="entry name" value="M3A_MIP"/>
</dbReference>
<dbReference type="InterPro" id="IPR024079">
    <property type="entry name" value="MetalloPept_cat_dom_sf"/>
</dbReference>
<dbReference type="InterPro" id="IPR024077">
    <property type="entry name" value="Neurolysin/TOP_dom2"/>
</dbReference>
<dbReference type="InterPro" id="IPR045090">
    <property type="entry name" value="Pept_M3A_M3B"/>
</dbReference>
<dbReference type="InterPro" id="IPR001567">
    <property type="entry name" value="Pept_M3A_M3B_dom"/>
</dbReference>
<dbReference type="PANTHER" id="PTHR11804:SF79">
    <property type="entry name" value="MITOCHONDRIAL INTERMEDIATE PEPTIDASE"/>
    <property type="match status" value="1"/>
</dbReference>
<dbReference type="PANTHER" id="PTHR11804">
    <property type="entry name" value="PROTEASE M3 THIMET OLIGOPEPTIDASE-RELATED"/>
    <property type="match status" value="1"/>
</dbReference>
<dbReference type="Pfam" id="PF01432">
    <property type="entry name" value="Peptidase_M3"/>
    <property type="match status" value="1"/>
</dbReference>
<dbReference type="SUPFAM" id="SSF55486">
    <property type="entry name" value="Metalloproteases ('zincins'), catalytic domain"/>
    <property type="match status" value="1"/>
</dbReference>
<dbReference type="PROSITE" id="PS00142">
    <property type="entry name" value="ZINC_PROTEASE"/>
    <property type="match status" value="1"/>
</dbReference>
<protein>
    <recommendedName>
        <fullName>Mitochondrial intermediate peptidase</fullName>
        <shortName>MIP</shortName>
        <ecNumber>3.4.24.59</ecNumber>
    </recommendedName>
    <alternativeName>
        <fullName>Octapeptidyl aminopeptidase</fullName>
    </alternativeName>
</protein>
<keyword id="KW-0378">Hydrolase</keyword>
<keyword id="KW-0479">Metal-binding</keyword>
<keyword id="KW-0482">Metalloprotease</keyword>
<keyword id="KW-0496">Mitochondrion</keyword>
<keyword id="KW-0645">Protease</keyword>
<keyword id="KW-1185">Reference proteome</keyword>
<keyword id="KW-0809">Transit peptide</keyword>
<keyword id="KW-0862">Zinc</keyword>